<comment type="similarity">
    <text evidence="1">Belongs to the bacterial ribosomal protein bL27 family.</text>
</comment>
<keyword id="KW-1185">Reference proteome</keyword>
<keyword id="KW-0687">Ribonucleoprotein</keyword>
<keyword id="KW-0689">Ribosomal protein</keyword>
<feature type="chain" id="PRO_1000081909" description="Large ribosomal subunit protein bL27">
    <location>
        <begin position="1"/>
        <end position="84"/>
    </location>
</feature>
<evidence type="ECO:0000255" key="1">
    <source>
        <dbReference type="HAMAP-Rule" id="MF_00539"/>
    </source>
</evidence>
<evidence type="ECO:0000305" key="2"/>
<reference key="1">
    <citation type="journal article" date="2007" name="Proc. Natl. Acad. Sci. U.S.A.">
        <title>Genome sequencing reveals complex secondary metabolome in the marine actinomycete Salinispora tropica.</title>
        <authorList>
            <person name="Udwary D.W."/>
            <person name="Zeigler L."/>
            <person name="Asolkar R.N."/>
            <person name="Singan V."/>
            <person name="Lapidus A."/>
            <person name="Fenical W."/>
            <person name="Jensen P.R."/>
            <person name="Moore B.S."/>
        </authorList>
    </citation>
    <scope>NUCLEOTIDE SEQUENCE [LARGE SCALE GENOMIC DNA]</scope>
    <source>
        <strain>ATCC BAA-916 / DSM 44818 / JCM 13857 / NBRC 105044 / CNB-440</strain>
    </source>
</reference>
<name>RL27_SALTO</name>
<gene>
    <name evidence="1" type="primary">rpmA</name>
    <name type="ordered locus">Strop_3480</name>
</gene>
<dbReference type="EMBL" id="CP000667">
    <property type="protein sequence ID" value="ABP55911.1"/>
    <property type="molecule type" value="Genomic_DNA"/>
</dbReference>
<dbReference type="RefSeq" id="WP_012014686.1">
    <property type="nucleotide sequence ID" value="NC_009380.1"/>
</dbReference>
<dbReference type="SMR" id="A4XAG2"/>
<dbReference type="STRING" id="369723.Strop_3480"/>
<dbReference type="KEGG" id="stp:Strop_3480"/>
<dbReference type="PATRIC" id="fig|369723.5.peg.3590"/>
<dbReference type="eggNOG" id="COG0211">
    <property type="taxonomic scope" value="Bacteria"/>
</dbReference>
<dbReference type="HOGENOM" id="CLU_095424_4_0_11"/>
<dbReference type="Proteomes" id="UP000000235">
    <property type="component" value="Chromosome"/>
</dbReference>
<dbReference type="GO" id="GO:0022625">
    <property type="term" value="C:cytosolic large ribosomal subunit"/>
    <property type="evidence" value="ECO:0007669"/>
    <property type="project" value="TreeGrafter"/>
</dbReference>
<dbReference type="GO" id="GO:0003735">
    <property type="term" value="F:structural constituent of ribosome"/>
    <property type="evidence" value="ECO:0007669"/>
    <property type="project" value="InterPro"/>
</dbReference>
<dbReference type="GO" id="GO:0006412">
    <property type="term" value="P:translation"/>
    <property type="evidence" value="ECO:0007669"/>
    <property type="project" value="UniProtKB-UniRule"/>
</dbReference>
<dbReference type="FunFam" id="2.40.50.100:FF:000020">
    <property type="entry name" value="50S ribosomal protein L27"/>
    <property type="match status" value="1"/>
</dbReference>
<dbReference type="Gene3D" id="2.40.50.100">
    <property type="match status" value="1"/>
</dbReference>
<dbReference type="HAMAP" id="MF_00539">
    <property type="entry name" value="Ribosomal_bL27"/>
    <property type="match status" value="1"/>
</dbReference>
<dbReference type="InterPro" id="IPR001684">
    <property type="entry name" value="Ribosomal_bL27"/>
</dbReference>
<dbReference type="InterPro" id="IPR018261">
    <property type="entry name" value="Ribosomal_bL27_CS"/>
</dbReference>
<dbReference type="NCBIfam" id="TIGR00062">
    <property type="entry name" value="L27"/>
    <property type="match status" value="1"/>
</dbReference>
<dbReference type="PANTHER" id="PTHR15893:SF0">
    <property type="entry name" value="LARGE RIBOSOMAL SUBUNIT PROTEIN BL27M"/>
    <property type="match status" value="1"/>
</dbReference>
<dbReference type="PANTHER" id="PTHR15893">
    <property type="entry name" value="RIBOSOMAL PROTEIN L27"/>
    <property type="match status" value="1"/>
</dbReference>
<dbReference type="Pfam" id="PF01016">
    <property type="entry name" value="Ribosomal_L27"/>
    <property type="match status" value="1"/>
</dbReference>
<dbReference type="PRINTS" id="PR00063">
    <property type="entry name" value="RIBOSOMALL27"/>
</dbReference>
<dbReference type="SUPFAM" id="SSF110324">
    <property type="entry name" value="Ribosomal L27 protein-like"/>
    <property type="match status" value="1"/>
</dbReference>
<dbReference type="PROSITE" id="PS00831">
    <property type="entry name" value="RIBOSOMAL_L27"/>
    <property type="match status" value="1"/>
</dbReference>
<accession>A4XAG2</accession>
<organism>
    <name type="scientific">Salinispora tropica (strain ATCC BAA-916 / DSM 44818 / JCM 13857 / NBRC 105044 / CNB-440)</name>
    <dbReference type="NCBI Taxonomy" id="369723"/>
    <lineage>
        <taxon>Bacteria</taxon>
        <taxon>Bacillati</taxon>
        <taxon>Actinomycetota</taxon>
        <taxon>Actinomycetes</taxon>
        <taxon>Micromonosporales</taxon>
        <taxon>Micromonosporaceae</taxon>
        <taxon>Salinispora</taxon>
    </lineage>
</organism>
<sequence length="84" mass="8848">MAHKKGASSSRNGRDSAAQRLGVKRFGGQLVSAGEIIIRQRGTKFHPGDLVGRGGDDTLFALAAGSVQFGTKRGRKTVSIVPQQ</sequence>
<proteinExistence type="inferred from homology"/>
<protein>
    <recommendedName>
        <fullName evidence="1">Large ribosomal subunit protein bL27</fullName>
    </recommendedName>
    <alternativeName>
        <fullName evidence="2">50S ribosomal protein L27</fullName>
    </alternativeName>
</protein>